<protein>
    <recommendedName>
        <fullName>Chaperone protein ClpB1</fullName>
    </recommendedName>
    <alternativeName>
        <fullName>ATP-dependent Clp protease ATP-binding subunit ClpB homolog 1</fullName>
    </alternativeName>
    <alternativeName>
        <fullName>Casein lytic proteinase B1</fullName>
    </alternativeName>
    <alternativeName>
        <fullName>Heat shock protein 101</fullName>
    </alternativeName>
    <alternativeName>
        <fullName evidence="12">Protein DEFECTIVE IN LONG-TERM ACQUIRED THERMOTOLERANCE</fullName>
    </alternativeName>
</protein>
<evidence type="ECO:0000255" key="1"/>
<evidence type="ECO:0000255" key="2">
    <source>
        <dbReference type="PROSITE-ProRule" id="PRU01251"/>
    </source>
</evidence>
<evidence type="ECO:0000269" key="3">
    <source>
    </source>
</evidence>
<evidence type="ECO:0000269" key="4">
    <source>
    </source>
</evidence>
<evidence type="ECO:0000269" key="5">
    <source>
    </source>
</evidence>
<evidence type="ECO:0000269" key="6">
    <source>
    </source>
</evidence>
<evidence type="ECO:0000269" key="7">
    <source>
    </source>
</evidence>
<evidence type="ECO:0000269" key="8">
    <source>
    </source>
</evidence>
<evidence type="ECO:0000269" key="9">
    <source>
    </source>
</evidence>
<evidence type="ECO:0000269" key="10">
    <source>
    </source>
</evidence>
<evidence type="ECO:0000269" key="11">
    <source>
    </source>
</evidence>
<evidence type="ECO:0000303" key="12">
    <source>
    </source>
</evidence>
<evidence type="ECO:0000305" key="13"/>
<sequence length="911" mass="101295">MNPEKFTHKTNETIATAHELAVNAGHAQFTPLHLAGALISDPTGIFPQAISSAGGENAAQSAERVINQALKKLPSQSPPPDDIPASSSLIKVIRRAQAAQKSRGDTHLAVDQLIMGLLEDSQIRDLLNEVGVATARVKSEVEKLRGKEGKKVESASGDTNFQALKTYGRDLVEQAGKLDPVIGRDEEIRRVVRILSRRTKNNPVLIGEPGVGKTAVVEGLAQRIVKGDVPNSLTDVRLISLDMGALVAGAKYRGEFEERLKSVLKEVEDAEGKVILFIDEIHLVLGAGKTEGSMDAANLFKPMLARGQLRCIGATTLEEYRKYVEKDAAFERRFQQVYVAEPSVPDTISILRGLKEKYEGHHGVRIQDRALINAAQLSARYITGRHLPDKAIDLVDEACANVRVQLDSQPEEIDNLERKRMQLEIELHALEREKDKASKARLIEVRKELDDLRDKLQPLTMKYRKEKERIDEIRRLKQKREELMFSLQEAERRYDLARAADLRYGAIQEVESAIAQLEGTSSEENVMLTENVGPEHIAEVVSRWTGIPVTRLGQNEKERLIGLADRLHKRVVGQNQAVNAVSEAILRSRAGLGRPQQPTGSFLFLGPTGVGKTELAKALAEQLFDDENLLVRIDMSEYMEQHSVSRLIGAPPGYVGHEEGGQLTEAVRRRPYCVILFDEVEKAHVAVFNTLLQVLDDGRLTDGQGRTVDFRNSVIIMTSNLGAEHLLAGLTGKVTMEVARDCVMREVRKHFRPELLNRLDEIVVFDPLSHDQLRKVARLQMKDVAVRLAERGVALAVTDAALDYILAESYDPVYGARPIRRWMEKKVVTELSKMVVREEIDENSTVYIDAGAGDLVYRVESGGLVDASTGKKSDVLIHIANGPKRSDAAQAVKKMRIEEIEDDDNEEMIED</sequence>
<comment type="function">
    <text evidence="3 4 5 6 9 10 11">Molecular chaperone that plays an important role in thermotolerance. Together with HSA32, required for long-term acquired thermotolerance (LAT) in plants and naturally high basal thermotolerance observed in germinating seedlings.</text>
</comment>
<comment type="subcellular location">
    <subcellularLocation>
        <location>Cytoplasm</location>
        <location>Cytosol</location>
    </subcellularLocation>
    <subcellularLocation>
        <location evidence="13">Nucleus</location>
    </subcellularLocation>
</comment>
<comment type="developmental stage">
    <text evidence="3 5">Starts to accumulate in maturing seeds 15 days after pollination and decreases rapidly during seed germination.</text>
</comment>
<comment type="induction">
    <text evidence="3 4 5 7 8 9 10 11">By heat stress and oilseed rape mosaic virus (PubMed:10760238, PubMed:10760305, PubMed:11489180, PubMed:16644052, PubMed:16995899, PubMed:17144892, PubMed:7866032). Regulated by HSA32 that retards its decay in a positive feedback loop (at protein level) during recovery after heat treatment (PubMed:23439916).</text>
</comment>
<comment type="disruption phenotype">
    <text evidence="4 5 10">No visible phenotype under normal growth conditions, but germinating seeds have greatly reduced basal thermotolerance and are unable to acquire thermotolerance (PubMed:10760305, PubMed:11489180). Faster degradation of HSA32 (at protein level) (PubMed:23439916).</text>
</comment>
<comment type="miscellaneous">
    <text>Over-expression of HSP101 partially reverse the sensitivity of 14 day-old seedling to heat stress.</text>
</comment>
<comment type="similarity">
    <text evidence="13">Belongs to the ClpA/ClpB family.</text>
</comment>
<dbReference type="EMBL" id="U13949">
    <property type="protein sequence ID" value="AAA67927.1"/>
    <property type="molecule type" value="mRNA"/>
</dbReference>
<dbReference type="EMBL" id="AF218796">
    <property type="protein sequence ID" value="AAF26423.1"/>
    <property type="molecule type" value="Genomic_DNA"/>
</dbReference>
<dbReference type="EMBL" id="AC020579">
    <property type="protein sequence ID" value="AAG52410.1"/>
    <property type="molecule type" value="Genomic_DNA"/>
</dbReference>
<dbReference type="EMBL" id="CP002684">
    <property type="protein sequence ID" value="AEE35576.1"/>
    <property type="molecule type" value="Genomic_DNA"/>
</dbReference>
<dbReference type="EMBL" id="AY062596">
    <property type="protein sequence ID" value="AAL32674.1"/>
    <property type="molecule type" value="mRNA"/>
</dbReference>
<dbReference type="PIR" id="F96771">
    <property type="entry name" value="F96771"/>
</dbReference>
<dbReference type="RefSeq" id="NP_565083.1">
    <property type="nucleotide sequence ID" value="NM_106091.4"/>
</dbReference>
<dbReference type="SMR" id="P42730"/>
<dbReference type="BioGRID" id="28990">
    <property type="interactions" value="2"/>
</dbReference>
<dbReference type="FunCoup" id="P42730">
    <property type="interactions" value="540"/>
</dbReference>
<dbReference type="IntAct" id="P42730">
    <property type="interactions" value="1"/>
</dbReference>
<dbReference type="STRING" id="3702.P42730"/>
<dbReference type="PaxDb" id="3702-AT1G74310.1"/>
<dbReference type="ProteomicsDB" id="246581"/>
<dbReference type="EnsemblPlants" id="AT1G74310.1">
    <property type="protein sequence ID" value="AT1G74310.1"/>
    <property type="gene ID" value="AT1G74310"/>
</dbReference>
<dbReference type="GeneID" id="843771"/>
<dbReference type="Gramene" id="AT1G74310.1">
    <property type="protein sequence ID" value="AT1G74310.1"/>
    <property type="gene ID" value="AT1G74310"/>
</dbReference>
<dbReference type="KEGG" id="ath:AT1G74310"/>
<dbReference type="Araport" id="AT1G74310"/>
<dbReference type="TAIR" id="AT1G74310">
    <property type="gene designation" value="HSP101"/>
</dbReference>
<dbReference type="eggNOG" id="KOG1051">
    <property type="taxonomic scope" value="Eukaryota"/>
</dbReference>
<dbReference type="HOGENOM" id="CLU_005070_4_2_1"/>
<dbReference type="InParanoid" id="P42730"/>
<dbReference type="OrthoDB" id="47330at2759"/>
<dbReference type="PhylomeDB" id="P42730"/>
<dbReference type="PRO" id="PR:P42730"/>
<dbReference type="Proteomes" id="UP000006548">
    <property type="component" value="Chromosome 1"/>
</dbReference>
<dbReference type="ExpressionAtlas" id="P42730">
    <property type="expression patterns" value="baseline and differential"/>
</dbReference>
<dbReference type="GO" id="GO:0009941">
    <property type="term" value="C:chloroplast envelope"/>
    <property type="evidence" value="ECO:0007005"/>
    <property type="project" value="TAIR"/>
</dbReference>
<dbReference type="GO" id="GO:0009570">
    <property type="term" value="C:chloroplast stroma"/>
    <property type="evidence" value="ECO:0007005"/>
    <property type="project" value="TAIR"/>
</dbReference>
<dbReference type="GO" id="GO:0005829">
    <property type="term" value="C:cytosol"/>
    <property type="evidence" value="ECO:0007669"/>
    <property type="project" value="UniProtKB-SubCell"/>
</dbReference>
<dbReference type="GO" id="GO:0005634">
    <property type="term" value="C:nucleus"/>
    <property type="evidence" value="ECO:0007669"/>
    <property type="project" value="UniProtKB-SubCell"/>
</dbReference>
<dbReference type="GO" id="GO:0005524">
    <property type="term" value="F:ATP binding"/>
    <property type="evidence" value="ECO:0007669"/>
    <property type="project" value="UniProtKB-KW"/>
</dbReference>
<dbReference type="GO" id="GO:0016887">
    <property type="term" value="F:ATP hydrolysis activity"/>
    <property type="evidence" value="ECO:0007669"/>
    <property type="project" value="InterPro"/>
</dbReference>
<dbReference type="GO" id="GO:0071456">
    <property type="term" value="P:cellular response to hypoxia"/>
    <property type="evidence" value="ECO:0007007"/>
    <property type="project" value="TAIR"/>
</dbReference>
<dbReference type="GO" id="GO:0045727">
    <property type="term" value="P:positive regulation of translation"/>
    <property type="evidence" value="ECO:0000315"/>
    <property type="project" value="TAIR"/>
</dbReference>
<dbReference type="GO" id="GO:0043335">
    <property type="term" value="P:protein unfolding"/>
    <property type="evidence" value="ECO:0000315"/>
    <property type="project" value="TAIR"/>
</dbReference>
<dbReference type="GO" id="GO:0009408">
    <property type="term" value="P:response to heat"/>
    <property type="evidence" value="ECO:0000315"/>
    <property type="project" value="TAIR"/>
</dbReference>
<dbReference type="CDD" id="cd00009">
    <property type="entry name" value="AAA"/>
    <property type="match status" value="1"/>
</dbReference>
<dbReference type="CDD" id="cd19499">
    <property type="entry name" value="RecA-like_ClpB_Hsp104-like"/>
    <property type="match status" value="1"/>
</dbReference>
<dbReference type="FunFam" id="1.10.1780.10:FF:000003">
    <property type="entry name" value="ATP-dependent chaperone ClpB"/>
    <property type="match status" value="1"/>
</dbReference>
<dbReference type="FunFam" id="3.40.50.300:FF:000120">
    <property type="entry name" value="ATP-dependent chaperone ClpB"/>
    <property type="match status" value="1"/>
</dbReference>
<dbReference type="FunFam" id="3.40.50.300:FF:000025">
    <property type="entry name" value="ATP-dependent Clp protease subunit"/>
    <property type="match status" value="1"/>
</dbReference>
<dbReference type="FunFam" id="3.40.50.300:FF:000010">
    <property type="entry name" value="Chaperone clpB 1, putative"/>
    <property type="match status" value="1"/>
</dbReference>
<dbReference type="Gene3D" id="1.10.8.60">
    <property type="match status" value="1"/>
</dbReference>
<dbReference type="Gene3D" id="1.10.1780.10">
    <property type="entry name" value="Clp, N-terminal domain"/>
    <property type="match status" value="1"/>
</dbReference>
<dbReference type="Gene3D" id="3.40.50.300">
    <property type="entry name" value="P-loop containing nucleotide triphosphate hydrolases"/>
    <property type="match status" value="3"/>
</dbReference>
<dbReference type="InterPro" id="IPR003593">
    <property type="entry name" value="AAA+_ATPase"/>
</dbReference>
<dbReference type="InterPro" id="IPR003959">
    <property type="entry name" value="ATPase_AAA_core"/>
</dbReference>
<dbReference type="InterPro" id="IPR019489">
    <property type="entry name" value="Clp_ATPase_C"/>
</dbReference>
<dbReference type="InterPro" id="IPR036628">
    <property type="entry name" value="Clp_N_dom_sf"/>
</dbReference>
<dbReference type="InterPro" id="IPR004176">
    <property type="entry name" value="Clp_R_dom"/>
</dbReference>
<dbReference type="InterPro" id="IPR001270">
    <property type="entry name" value="ClpA/B"/>
</dbReference>
<dbReference type="InterPro" id="IPR018368">
    <property type="entry name" value="ClpA/B_CS1"/>
</dbReference>
<dbReference type="InterPro" id="IPR028299">
    <property type="entry name" value="ClpA/B_CS2"/>
</dbReference>
<dbReference type="InterPro" id="IPR041546">
    <property type="entry name" value="ClpA/ClpB_AAA_lid"/>
</dbReference>
<dbReference type="InterPro" id="IPR050130">
    <property type="entry name" value="ClpA_ClpB"/>
</dbReference>
<dbReference type="InterPro" id="IPR027417">
    <property type="entry name" value="P-loop_NTPase"/>
</dbReference>
<dbReference type="PANTHER" id="PTHR11638">
    <property type="entry name" value="ATP-DEPENDENT CLP PROTEASE"/>
    <property type="match status" value="1"/>
</dbReference>
<dbReference type="PANTHER" id="PTHR11638:SF18">
    <property type="entry name" value="HEAT SHOCK PROTEIN 104"/>
    <property type="match status" value="1"/>
</dbReference>
<dbReference type="Pfam" id="PF00004">
    <property type="entry name" value="AAA"/>
    <property type="match status" value="1"/>
</dbReference>
<dbReference type="Pfam" id="PF07724">
    <property type="entry name" value="AAA_2"/>
    <property type="match status" value="1"/>
</dbReference>
<dbReference type="Pfam" id="PF17871">
    <property type="entry name" value="AAA_lid_9"/>
    <property type="match status" value="1"/>
</dbReference>
<dbReference type="Pfam" id="PF02861">
    <property type="entry name" value="Clp_N"/>
    <property type="match status" value="2"/>
</dbReference>
<dbReference type="Pfam" id="PF10431">
    <property type="entry name" value="ClpB_D2-small"/>
    <property type="match status" value="1"/>
</dbReference>
<dbReference type="PRINTS" id="PR00300">
    <property type="entry name" value="CLPPROTEASEA"/>
</dbReference>
<dbReference type="SMART" id="SM00382">
    <property type="entry name" value="AAA"/>
    <property type="match status" value="2"/>
</dbReference>
<dbReference type="SMART" id="SM01086">
    <property type="entry name" value="ClpB_D2-small"/>
    <property type="match status" value="1"/>
</dbReference>
<dbReference type="SUPFAM" id="SSF81923">
    <property type="entry name" value="Double Clp-N motif"/>
    <property type="match status" value="1"/>
</dbReference>
<dbReference type="SUPFAM" id="SSF52540">
    <property type="entry name" value="P-loop containing nucleoside triphosphate hydrolases"/>
    <property type="match status" value="2"/>
</dbReference>
<dbReference type="PROSITE" id="PS51903">
    <property type="entry name" value="CLP_R"/>
    <property type="match status" value="1"/>
</dbReference>
<dbReference type="PROSITE" id="PS00870">
    <property type="entry name" value="CLPAB_1"/>
    <property type="match status" value="1"/>
</dbReference>
<dbReference type="PROSITE" id="PS00871">
    <property type="entry name" value="CLPAB_2"/>
    <property type="match status" value="1"/>
</dbReference>
<feature type="chain" id="PRO_0000191220" description="Chaperone protein ClpB1">
    <location>
        <begin position="1"/>
        <end position="911"/>
    </location>
</feature>
<feature type="domain" description="Clp R" evidence="2">
    <location>
        <begin position="3"/>
        <end position="147"/>
    </location>
</feature>
<feature type="region of interest" description="Repeat 1" evidence="2">
    <location>
        <begin position="6"/>
        <end position="73"/>
    </location>
</feature>
<feature type="region of interest" description="Repeat 2" evidence="2">
    <location>
        <begin position="85"/>
        <end position="147"/>
    </location>
</feature>
<feature type="region of interest" description="I">
    <location>
        <begin position="164"/>
        <end position="410"/>
    </location>
</feature>
<feature type="region of interest" description="II">
    <location>
        <begin position="532"/>
        <end position="723"/>
    </location>
</feature>
<feature type="coiled-coil region" evidence="1">
    <location>
        <begin position="403"/>
        <end position="500"/>
    </location>
</feature>
<feature type="binding site" evidence="1">
    <location>
        <begin position="207"/>
        <end position="214"/>
    </location>
    <ligand>
        <name>ATP</name>
        <dbReference type="ChEBI" id="CHEBI:30616"/>
    </ligand>
</feature>
<feature type="binding site" evidence="1">
    <location>
        <begin position="606"/>
        <end position="613"/>
    </location>
    <ligand>
        <name>ATP</name>
        <dbReference type="ChEBI" id="CHEBI:30616"/>
    </ligand>
</feature>
<feature type="mutagenesis site" description="In dlt1-2; normal growth and development under nonstress conditions. Impaired chaperone activity and thermotolerance function, but normal positive regulation of HSA32 during recovery after heat treatment." evidence="10">
    <original>H</original>
    <variation>Y</variation>
    <location>
        <position position="33"/>
    </location>
</feature>
<feature type="mutagenesis site" description="In hot1-4; reduced basal thermotolerance and unable to acquire thermotolerance." evidence="6">
    <original>A</original>
    <variation>T</variation>
    <location>
        <position position="499"/>
    </location>
</feature>
<feature type="mutagenesis site" description="In hot1-6; reduced ability to acquire thermotolerance." evidence="6">
    <original>E</original>
    <variation>K</variation>
    <location>
        <position position="509"/>
    </location>
</feature>
<feature type="mutagenesis site" description="In dlt1-1; normal growth and development under nonstress conditions, and normal chaperone activity and thermotolerance function. Compromised positive regulation of HSA32 during recovery after heat treatment." evidence="10">
    <original>T</original>
    <variation>I</variation>
    <location>
        <position position="599"/>
    </location>
</feature>
<feature type="mutagenesis site" description="In hot1-1; greatly reduced basal thermotolerance and unable to acquire thermotolerance." evidence="4 6">
    <original>E</original>
    <variation>K</variation>
    <location>
        <position position="637"/>
    </location>
</feature>
<feature type="mutagenesis site" description="In hot1-5; unable to acquire thermotolerance." evidence="6">
    <original>R</original>
    <variation>K</variation>
    <location>
        <position position="706"/>
    </location>
</feature>
<feature type="mutagenesis site" description="In hot1-7; reduced ability to acquire thermotolerance." evidence="6">
    <original>G</original>
    <variation>D</variation>
    <location>
        <position position="815"/>
    </location>
</feature>
<feature type="sequence conflict" description="In Ref. 5; AAL32674." evidence="13" ref="5">
    <original>V</original>
    <variation>F</variation>
    <location>
        <position position="141"/>
    </location>
</feature>
<feature type="sequence conflict" description="In Ref. 1; AAA67927." evidence="13" ref="1">
    <original>P</original>
    <variation>A</variation>
    <location>
        <position position="595"/>
    </location>
</feature>
<gene>
    <name type="primary">CLPB1</name>
    <name evidence="12" type="synonym">DLT1</name>
    <name type="synonym">HOT1</name>
    <name type="synonym">HSP101</name>
    <name type="ordered locus">At1g74310</name>
    <name type="ORF">F1O17.2</name>
</gene>
<keyword id="KW-0067">ATP-binding</keyword>
<keyword id="KW-0143">Chaperone</keyword>
<keyword id="KW-0175">Coiled coil</keyword>
<keyword id="KW-0963">Cytoplasm</keyword>
<keyword id="KW-0547">Nucleotide-binding</keyword>
<keyword id="KW-0539">Nucleus</keyword>
<keyword id="KW-1185">Reference proteome</keyword>
<keyword id="KW-0677">Repeat</keyword>
<keyword id="KW-0346">Stress response</keyword>
<name>CLPB1_ARATH</name>
<proteinExistence type="evidence at protein level"/>
<organism>
    <name type="scientific">Arabidopsis thaliana</name>
    <name type="common">Mouse-ear cress</name>
    <dbReference type="NCBI Taxonomy" id="3702"/>
    <lineage>
        <taxon>Eukaryota</taxon>
        <taxon>Viridiplantae</taxon>
        <taxon>Streptophyta</taxon>
        <taxon>Embryophyta</taxon>
        <taxon>Tracheophyta</taxon>
        <taxon>Spermatophyta</taxon>
        <taxon>Magnoliopsida</taxon>
        <taxon>eudicotyledons</taxon>
        <taxon>Gunneridae</taxon>
        <taxon>Pentapetalae</taxon>
        <taxon>rosids</taxon>
        <taxon>malvids</taxon>
        <taxon>Brassicales</taxon>
        <taxon>Brassicaceae</taxon>
        <taxon>Camelineae</taxon>
        <taxon>Arabidopsis</taxon>
    </lineage>
</organism>
<reference key="1">
    <citation type="journal article" date="1994" name="Plant Cell">
        <title>An Arabidopsis heat shock protein complements a thermotolerance defect in yeast.</title>
        <authorList>
            <person name="Schirmer E.C."/>
            <person name="Lindquist S."/>
            <person name="Vierling E."/>
        </authorList>
    </citation>
    <scope>NUCLEOTIDE SEQUENCE [MRNA]</scope>
    <scope>FUNCTION</scope>
    <scope>INDUCTION BY HEAT STRESS</scope>
    <source>
        <strain>cv. Columbia</strain>
        <tissue>Leaf</tissue>
    </source>
</reference>
<reference key="2">
    <citation type="journal article" date="2000" name="Proc. Natl. Acad. Sci. U.S.A.">
        <title>Mutants of Arabidopsis thaliana defective in the acquisition of tolerance to high temperature stress.</title>
        <authorList>
            <person name="Hong S.-W."/>
            <person name="Vierling E."/>
        </authorList>
    </citation>
    <scope>NUCLEOTIDE SEQUENCE [GENOMIC DNA]</scope>
    <scope>FUNCTION</scope>
    <scope>INDUCTION BY HEAT STRESS</scope>
    <scope>DISRUPTION PHENOTYPE</scope>
    <scope>MUTAGENESIS OF GLU-637</scope>
    <source>
        <strain>cv. Columbia</strain>
    </source>
</reference>
<reference key="3">
    <citation type="journal article" date="2000" name="Nature">
        <title>Sequence and analysis of chromosome 1 of the plant Arabidopsis thaliana.</title>
        <authorList>
            <person name="Theologis A."/>
            <person name="Ecker J.R."/>
            <person name="Palm C.J."/>
            <person name="Federspiel N.A."/>
            <person name="Kaul S."/>
            <person name="White O."/>
            <person name="Alonso J."/>
            <person name="Altafi H."/>
            <person name="Araujo R."/>
            <person name="Bowman C.L."/>
            <person name="Brooks S.Y."/>
            <person name="Buehler E."/>
            <person name="Chan A."/>
            <person name="Chao Q."/>
            <person name="Chen H."/>
            <person name="Cheuk R.F."/>
            <person name="Chin C.W."/>
            <person name="Chung M.K."/>
            <person name="Conn L."/>
            <person name="Conway A.B."/>
            <person name="Conway A.R."/>
            <person name="Creasy T.H."/>
            <person name="Dewar K."/>
            <person name="Dunn P."/>
            <person name="Etgu P."/>
            <person name="Feldblyum T.V."/>
            <person name="Feng J.-D."/>
            <person name="Fong B."/>
            <person name="Fujii C.Y."/>
            <person name="Gill J.E."/>
            <person name="Goldsmith A.D."/>
            <person name="Haas B."/>
            <person name="Hansen N.F."/>
            <person name="Hughes B."/>
            <person name="Huizar L."/>
            <person name="Hunter J.L."/>
            <person name="Jenkins J."/>
            <person name="Johnson-Hopson C."/>
            <person name="Khan S."/>
            <person name="Khaykin E."/>
            <person name="Kim C.J."/>
            <person name="Koo H.L."/>
            <person name="Kremenetskaia I."/>
            <person name="Kurtz D.B."/>
            <person name="Kwan A."/>
            <person name="Lam B."/>
            <person name="Langin-Hooper S."/>
            <person name="Lee A."/>
            <person name="Lee J.M."/>
            <person name="Lenz C.A."/>
            <person name="Li J.H."/>
            <person name="Li Y.-P."/>
            <person name="Lin X."/>
            <person name="Liu S.X."/>
            <person name="Liu Z.A."/>
            <person name="Luros J.S."/>
            <person name="Maiti R."/>
            <person name="Marziali A."/>
            <person name="Militscher J."/>
            <person name="Miranda M."/>
            <person name="Nguyen M."/>
            <person name="Nierman W.C."/>
            <person name="Osborne B.I."/>
            <person name="Pai G."/>
            <person name="Peterson J."/>
            <person name="Pham P.K."/>
            <person name="Rizzo M."/>
            <person name="Rooney T."/>
            <person name="Rowley D."/>
            <person name="Sakano H."/>
            <person name="Salzberg S.L."/>
            <person name="Schwartz J.R."/>
            <person name="Shinn P."/>
            <person name="Southwick A.M."/>
            <person name="Sun H."/>
            <person name="Tallon L.J."/>
            <person name="Tambunga G."/>
            <person name="Toriumi M.J."/>
            <person name="Town C.D."/>
            <person name="Utterback T."/>
            <person name="Van Aken S."/>
            <person name="Vaysberg M."/>
            <person name="Vysotskaia V.S."/>
            <person name="Walker M."/>
            <person name="Wu D."/>
            <person name="Yu G."/>
            <person name="Fraser C.M."/>
            <person name="Venter J.C."/>
            <person name="Davis R.W."/>
        </authorList>
    </citation>
    <scope>NUCLEOTIDE SEQUENCE [LARGE SCALE GENOMIC DNA]</scope>
    <source>
        <strain>cv. Columbia</strain>
    </source>
</reference>
<reference key="4">
    <citation type="journal article" date="2017" name="Plant J.">
        <title>Araport11: a complete reannotation of the Arabidopsis thaliana reference genome.</title>
        <authorList>
            <person name="Cheng C.Y."/>
            <person name="Krishnakumar V."/>
            <person name="Chan A.P."/>
            <person name="Thibaud-Nissen F."/>
            <person name="Schobel S."/>
            <person name="Town C.D."/>
        </authorList>
    </citation>
    <scope>GENOME REANNOTATION</scope>
    <source>
        <strain>cv. Columbia</strain>
    </source>
</reference>
<reference key="5">
    <citation type="journal article" date="2003" name="Science">
        <title>Empirical analysis of transcriptional activity in the Arabidopsis genome.</title>
        <authorList>
            <person name="Yamada K."/>
            <person name="Lim J."/>
            <person name="Dale J.M."/>
            <person name="Chen H."/>
            <person name="Shinn P."/>
            <person name="Palm C.J."/>
            <person name="Southwick A.M."/>
            <person name="Wu H.C."/>
            <person name="Kim C.J."/>
            <person name="Nguyen M."/>
            <person name="Pham P.K."/>
            <person name="Cheuk R.F."/>
            <person name="Karlin-Newmann G."/>
            <person name="Liu S.X."/>
            <person name="Lam B."/>
            <person name="Sakano H."/>
            <person name="Wu T."/>
            <person name="Yu G."/>
            <person name="Miranda M."/>
            <person name="Quach H.L."/>
            <person name="Tripp M."/>
            <person name="Chang C.H."/>
            <person name="Lee J.M."/>
            <person name="Toriumi M.J."/>
            <person name="Chan M.M."/>
            <person name="Tang C.C."/>
            <person name="Onodera C.S."/>
            <person name="Deng J.M."/>
            <person name="Akiyama K."/>
            <person name="Ansari Y."/>
            <person name="Arakawa T."/>
            <person name="Banh J."/>
            <person name="Banno F."/>
            <person name="Bowser L."/>
            <person name="Brooks S.Y."/>
            <person name="Carninci P."/>
            <person name="Chao Q."/>
            <person name="Choy N."/>
            <person name="Enju A."/>
            <person name="Goldsmith A.D."/>
            <person name="Gurjal M."/>
            <person name="Hansen N.F."/>
            <person name="Hayashizaki Y."/>
            <person name="Johnson-Hopson C."/>
            <person name="Hsuan V.W."/>
            <person name="Iida K."/>
            <person name="Karnes M."/>
            <person name="Khan S."/>
            <person name="Koesema E."/>
            <person name="Ishida J."/>
            <person name="Jiang P.X."/>
            <person name="Jones T."/>
            <person name="Kawai J."/>
            <person name="Kamiya A."/>
            <person name="Meyers C."/>
            <person name="Nakajima M."/>
            <person name="Narusaka M."/>
            <person name="Seki M."/>
            <person name="Sakurai T."/>
            <person name="Satou M."/>
            <person name="Tamse R."/>
            <person name="Vaysberg M."/>
            <person name="Wallender E.K."/>
            <person name="Wong C."/>
            <person name="Yamamura Y."/>
            <person name="Yuan S."/>
            <person name="Shinozaki K."/>
            <person name="Davis R.W."/>
            <person name="Theologis A."/>
            <person name="Ecker J.R."/>
        </authorList>
    </citation>
    <scope>NUCLEOTIDE SEQUENCE [LARGE SCALE MRNA] OF 1-460</scope>
    <source>
        <strain>cv. Columbia</strain>
    </source>
</reference>
<reference key="6">
    <citation type="journal article" date="2000" name="Plant Cell">
        <title>Heat shock protein 101 plays a crucial role in thermotolerance in Arabidopsis.</title>
        <authorList>
            <person name="Queitsch C."/>
            <person name="Hong S.W."/>
            <person name="Vierling E."/>
            <person name="Lindquist S."/>
        </authorList>
    </citation>
    <scope>FUNCTION</scope>
    <scope>DEVELOPMENTAL STAGE</scope>
    <scope>INDUCTION BY HEAT STRESS</scope>
</reference>
<reference key="7">
    <citation type="journal article" date="2001" name="Plant J.">
        <title>Hsp101 is necessary for heat tolerance but dispensable for development and germination in the absence of stress.</title>
        <authorList>
            <person name="Hong S.W."/>
            <person name="Vierling E."/>
        </authorList>
    </citation>
    <scope>FUNCTION</scope>
    <scope>DEVELOPMENTAL STAGE</scope>
    <scope>INDUCTION BY HEAT STRESS</scope>
    <scope>DISRUPTION PHENOTYPE</scope>
</reference>
<reference key="8">
    <citation type="journal article" date="2005" name="Plant Cell">
        <title>Genetic analysis reveals domain interactions of Arabidopsis Hsp100/ClpB and cooperation with the small heat shock protein chaperone system.</title>
        <authorList>
            <person name="Lee U."/>
            <person name="Wie C."/>
            <person name="Escobar M."/>
            <person name="Williams B."/>
            <person name="Hong S.W."/>
            <person name="Vierling E."/>
        </authorList>
    </citation>
    <scope>FUNCTION</scope>
    <scope>MUTAGENESIS OF ALA-499; GLU-509; GLU-637; ARG-706 AND GLY-815</scope>
</reference>
<reference key="9">
    <citation type="journal article" date="2006" name="Plant J.">
        <title>An Arabidopsis chloroplast-targeted Hsp101 homologue, APG6, has an essential role in chloroplast development as well as heat-stress response.</title>
        <authorList>
            <person name="Myouga F."/>
            <person name="Motohashi R."/>
            <person name="Kuromori T."/>
            <person name="Nagata N."/>
            <person name="Shinozaki K."/>
        </authorList>
    </citation>
    <scope>INDUCTION BY HEAT STRESS</scope>
</reference>
<reference key="10">
    <citation type="journal article" date="2006" name="Virus Res.">
        <title>Tobamovirus infection is independent of HSP101 mRNA induction and protein expression.</title>
        <authorList>
            <person name="Carr T."/>
            <person name="Wang Y."/>
            <person name="Huang Z."/>
            <person name="Yeakley J.M."/>
            <person name="Fan J.B."/>
            <person name="Whitham S.A."/>
        </authorList>
    </citation>
    <scope>INDUCTION BY OILSEED RAPE MOSAIC VIRUS</scope>
</reference>
<reference key="11">
    <citation type="journal article" date="2007" name="Plant J.">
        <title>The Arabidopsis ClpB/Hsp100 family of proteins: chaperones for stress and chloroplast development.</title>
        <authorList>
            <person name="Lee U."/>
            <person name="Rioflorido I."/>
            <person name="Hong S.W."/>
            <person name="Larkindale J."/>
            <person name="Waters E.R."/>
            <person name="Vierling E."/>
        </authorList>
    </citation>
    <scope>FUNCTION</scope>
    <scope>INDUCTION BY HEAT STRESS</scope>
</reference>
<reference key="12">
    <citation type="journal article" date="2013" name="Plant Physiol.">
        <title>Interplay between heat shock proteins HSP101 and HSA32 prolongs heat acclimation memory posttranscriptionally in Arabidopsis.</title>
        <authorList>
            <person name="Wu T.-Y."/>
            <person name="Juan Y.-T."/>
            <person name="Hsu Y.-H."/>
            <person name="Wu S.-H."/>
            <person name="Liao H.-T."/>
            <person name="Fung R.W.M."/>
            <person name="Charng Y.-Y."/>
        </authorList>
    </citation>
    <scope>FUNCTION</scope>
    <scope>MUTAGENESIS OF HIS-33 AND THR-599</scope>
    <scope>DISRUPTION PHENOTYPE</scope>
    <scope>INDUCTION BY HSA32</scope>
    <source>
        <strain>cv. Columbia</strain>
    </source>
</reference>
<accession>P42730</accession>
<accession>Q8W4F2</accession>
<accession>Q9LE57</accession>